<comment type="function">
    <text evidence="1">Together with its co-chaperonin GroES, plays an essential role in assisting protein folding. The GroEL-GroES system forms a nano-cage that allows encapsulation of the non-native substrate proteins and provides a physical environment optimized to promote and accelerate protein folding.</text>
</comment>
<comment type="catalytic activity">
    <reaction evidence="1">
        <text>ATP + H2O + a folded polypeptide = ADP + phosphate + an unfolded polypeptide.</text>
        <dbReference type="EC" id="5.6.1.7"/>
    </reaction>
</comment>
<comment type="subunit">
    <text evidence="1">Forms a cylinder of 14 subunits composed of two heptameric rings stacked back-to-back. Interacts with the co-chaperonin GroES.</text>
</comment>
<comment type="subcellular location">
    <subcellularLocation>
        <location evidence="1">Cytoplasm</location>
    </subcellularLocation>
</comment>
<comment type="similarity">
    <text evidence="1">Belongs to the chaperonin (HSP60) family.</text>
</comment>
<evidence type="ECO:0000255" key="1">
    <source>
        <dbReference type="HAMAP-Rule" id="MF_00600"/>
    </source>
</evidence>
<evidence type="ECO:0000256" key="2">
    <source>
        <dbReference type="SAM" id="MobiDB-lite"/>
    </source>
</evidence>
<accession>Q93N34</accession>
<reference key="1">
    <citation type="submission" date="2001-04" db="EMBL/GenBank/DDBJ databases">
        <title>Rhopalosiphum padi endosymbiont GroEL-related molecular chaperonin SymL (symL) gene.</title>
        <authorList>
            <person name="Wu Y."/>
            <person name="Cui X."/>
            <person name="Lin L."/>
        </authorList>
    </citation>
    <scope>NUCLEOTIDE SEQUENCE [GENOMIC DNA]</scope>
</reference>
<dbReference type="EC" id="5.6.1.7" evidence="1"/>
<dbReference type="EMBL" id="AF387864">
    <property type="protein sequence ID" value="AAK62971.1"/>
    <property type="molecule type" value="Genomic_DNA"/>
</dbReference>
<dbReference type="SMR" id="Q93N34"/>
<dbReference type="GO" id="GO:0005737">
    <property type="term" value="C:cytoplasm"/>
    <property type="evidence" value="ECO:0007669"/>
    <property type="project" value="UniProtKB-SubCell"/>
</dbReference>
<dbReference type="GO" id="GO:0005524">
    <property type="term" value="F:ATP binding"/>
    <property type="evidence" value="ECO:0007669"/>
    <property type="project" value="UniProtKB-UniRule"/>
</dbReference>
<dbReference type="GO" id="GO:0140662">
    <property type="term" value="F:ATP-dependent protein folding chaperone"/>
    <property type="evidence" value="ECO:0007669"/>
    <property type="project" value="InterPro"/>
</dbReference>
<dbReference type="GO" id="GO:0016853">
    <property type="term" value="F:isomerase activity"/>
    <property type="evidence" value="ECO:0007669"/>
    <property type="project" value="UniProtKB-KW"/>
</dbReference>
<dbReference type="GO" id="GO:0051082">
    <property type="term" value="F:unfolded protein binding"/>
    <property type="evidence" value="ECO:0007669"/>
    <property type="project" value="UniProtKB-UniRule"/>
</dbReference>
<dbReference type="GO" id="GO:0042026">
    <property type="term" value="P:protein refolding"/>
    <property type="evidence" value="ECO:0007669"/>
    <property type="project" value="UniProtKB-UniRule"/>
</dbReference>
<dbReference type="CDD" id="cd03344">
    <property type="entry name" value="GroEL"/>
    <property type="match status" value="1"/>
</dbReference>
<dbReference type="FunFam" id="1.10.560.10:FF:000001">
    <property type="entry name" value="60 kDa chaperonin"/>
    <property type="match status" value="1"/>
</dbReference>
<dbReference type="FunFam" id="3.50.7.10:FF:000001">
    <property type="entry name" value="60 kDa chaperonin"/>
    <property type="match status" value="1"/>
</dbReference>
<dbReference type="Gene3D" id="3.50.7.10">
    <property type="entry name" value="GroEL"/>
    <property type="match status" value="1"/>
</dbReference>
<dbReference type="Gene3D" id="1.10.560.10">
    <property type="entry name" value="GroEL-like equatorial domain"/>
    <property type="match status" value="1"/>
</dbReference>
<dbReference type="Gene3D" id="3.30.260.10">
    <property type="entry name" value="TCP-1-like chaperonin intermediate domain"/>
    <property type="match status" value="1"/>
</dbReference>
<dbReference type="HAMAP" id="MF_00600">
    <property type="entry name" value="CH60"/>
    <property type="match status" value="1"/>
</dbReference>
<dbReference type="InterPro" id="IPR018370">
    <property type="entry name" value="Chaperonin_Cpn60_CS"/>
</dbReference>
<dbReference type="InterPro" id="IPR001844">
    <property type="entry name" value="Cpn60/GroEL"/>
</dbReference>
<dbReference type="InterPro" id="IPR002423">
    <property type="entry name" value="Cpn60/GroEL/TCP-1"/>
</dbReference>
<dbReference type="InterPro" id="IPR027409">
    <property type="entry name" value="GroEL-like_apical_dom_sf"/>
</dbReference>
<dbReference type="InterPro" id="IPR027413">
    <property type="entry name" value="GROEL-like_equatorial_sf"/>
</dbReference>
<dbReference type="InterPro" id="IPR027410">
    <property type="entry name" value="TCP-1-like_intermed_sf"/>
</dbReference>
<dbReference type="NCBIfam" id="TIGR02348">
    <property type="entry name" value="GroEL"/>
    <property type="match status" value="1"/>
</dbReference>
<dbReference type="NCBIfam" id="NF000592">
    <property type="entry name" value="PRK00013.1"/>
    <property type="match status" value="1"/>
</dbReference>
<dbReference type="NCBIfam" id="NF009487">
    <property type="entry name" value="PRK12849.1"/>
    <property type="match status" value="1"/>
</dbReference>
<dbReference type="NCBIfam" id="NF009488">
    <property type="entry name" value="PRK12850.1"/>
    <property type="match status" value="1"/>
</dbReference>
<dbReference type="NCBIfam" id="NF009489">
    <property type="entry name" value="PRK12851.1"/>
    <property type="match status" value="1"/>
</dbReference>
<dbReference type="PANTHER" id="PTHR45633">
    <property type="entry name" value="60 KDA HEAT SHOCK PROTEIN, MITOCHONDRIAL"/>
    <property type="match status" value="1"/>
</dbReference>
<dbReference type="Pfam" id="PF00118">
    <property type="entry name" value="Cpn60_TCP1"/>
    <property type="match status" value="1"/>
</dbReference>
<dbReference type="PRINTS" id="PR00298">
    <property type="entry name" value="CHAPERONIN60"/>
</dbReference>
<dbReference type="SUPFAM" id="SSF52029">
    <property type="entry name" value="GroEL apical domain-like"/>
    <property type="match status" value="1"/>
</dbReference>
<dbReference type="SUPFAM" id="SSF48592">
    <property type="entry name" value="GroEL equatorial domain-like"/>
    <property type="match status" value="1"/>
</dbReference>
<dbReference type="SUPFAM" id="SSF54849">
    <property type="entry name" value="GroEL-intermediate domain like"/>
    <property type="match status" value="1"/>
</dbReference>
<dbReference type="PROSITE" id="PS00296">
    <property type="entry name" value="CHAPERONINS_CPN60"/>
    <property type="match status" value="1"/>
</dbReference>
<gene>
    <name evidence="1" type="primary">groEL</name>
    <name evidence="1" type="synonym">groL</name>
    <name type="synonym">symL</name>
</gene>
<sequence length="548" mass="57752">MAAKDVKFGNEARIKMLRGVNVLADAVKVTLGPKGRNVVLDKSFGAPSITKDGVSVAREIELEDKFENMGAQMVKEVASKANDAAGDGTTTATLLAQSIVNEGLKAVAAGMNPMDLKRGIDKAVISAVEELKNLSVPCSDSKAITQVGTISANADEKVGALIAEAMEKVGNDGVITVEEGTGLQNELEVVKGMQFDRGYLSPYFINKPETGVVELENPYILMADKKISNVREMLPILESVAKSGKPLLIISEDLEGEALATLVVNSTRGIVKVAAVKAPGFGDRRKAMLQDISVLTGGSVISEELAMDLEKSTLEDLGQAKRVVINKDTTTIIGGVGEKQAIQSRISQIPQEIQEATSDYDKEKLNERLAKLSGGVAGLKVSAATEVEMKEKKARVEDALHATRAAVEEGVVAGGGVALVRVAGKISNLRGHNEDQNVGIRVALRAMEAPLRQIVSNSGEEPSVVTNNVKDGKGNYGYNAATDEYGDMIDFGILDPTKVTRSALQYAASVAGLMITTECMVTDLPKEDKTSDASSSPAGGMGGMGGMM</sequence>
<proteinExistence type="inferred from homology"/>
<organism>
    <name type="scientific">Buchnera aphidicola subsp. Rhopalosiphum padi</name>
    <dbReference type="NCBI Taxonomy" id="98793"/>
    <lineage>
        <taxon>Bacteria</taxon>
        <taxon>Pseudomonadati</taxon>
        <taxon>Pseudomonadota</taxon>
        <taxon>Gammaproteobacteria</taxon>
        <taxon>Enterobacterales</taxon>
        <taxon>Erwiniaceae</taxon>
        <taxon>Buchnera</taxon>
    </lineage>
</organism>
<name>CH60_BUCRP</name>
<feature type="chain" id="PRO_0000063312" description="Chaperonin GroEL">
    <location>
        <begin position="1"/>
        <end position="548"/>
    </location>
</feature>
<feature type="region of interest" description="Disordered" evidence="2">
    <location>
        <begin position="525"/>
        <end position="548"/>
    </location>
</feature>
<feature type="compositionally biased region" description="Gly residues" evidence="2">
    <location>
        <begin position="539"/>
        <end position="548"/>
    </location>
</feature>
<feature type="binding site" evidence="1">
    <location>
        <begin position="30"/>
        <end position="33"/>
    </location>
    <ligand>
        <name>ATP</name>
        <dbReference type="ChEBI" id="CHEBI:30616"/>
    </ligand>
</feature>
<feature type="binding site" evidence="1">
    <location>
        <position position="51"/>
    </location>
    <ligand>
        <name>ATP</name>
        <dbReference type="ChEBI" id="CHEBI:30616"/>
    </ligand>
</feature>
<feature type="binding site" evidence="1">
    <location>
        <begin position="87"/>
        <end position="91"/>
    </location>
    <ligand>
        <name>ATP</name>
        <dbReference type="ChEBI" id="CHEBI:30616"/>
    </ligand>
</feature>
<feature type="binding site" evidence="1">
    <location>
        <position position="415"/>
    </location>
    <ligand>
        <name>ATP</name>
        <dbReference type="ChEBI" id="CHEBI:30616"/>
    </ligand>
</feature>
<feature type="binding site" evidence="1">
    <location>
        <begin position="479"/>
        <end position="481"/>
    </location>
    <ligand>
        <name>ATP</name>
        <dbReference type="ChEBI" id="CHEBI:30616"/>
    </ligand>
</feature>
<feature type="binding site" evidence="1">
    <location>
        <position position="495"/>
    </location>
    <ligand>
        <name>ATP</name>
        <dbReference type="ChEBI" id="CHEBI:30616"/>
    </ligand>
</feature>
<keyword id="KW-0067">ATP-binding</keyword>
<keyword id="KW-0143">Chaperone</keyword>
<keyword id="KW-0963">Cytoplasm</keyword>
<keyword id="KW-0413">Isomerase</keyword>
<keyword id="KW-0547">Nucleotide-binding</keyword>
<protein>
    <recommendedName>
        <fullName evidence="1">Chaperonin GroEL</fullName>
        <ecNumber evidence="1">5.6.1.7</ecNumber>
    </recommendedName>
    <alternativeName>
        <fullName evidence="1">60 kDa chaperonin</fullName>
    </alternativeName>
    <alternativeName>
        <fullName evidence="1">Chaperonin-60</fullName>
        <shortName evidence="1">Cpn60</shortName>
    </alternativeName>
</protein>